<protein>
    <recommendedName>
        <fullName evidence="1">Heat-inducible transcription repressor HrcA</fullName>
    </recommendedName>
</protein>
<reference key="1">
    <citation type="journal article" date="2004" name="Proc. Natl. Acad. Sci. U.S.A.">
        <title>The louse-borne human pathogen Bartonella quintana is a genomic derivative of the zoonotic agent Bartonella henselae.</title>
        <authorList>
            <person name="Alsmark U.C.M."/>
            <person name="Frank A.C."/>
            <person name="Karlberg E.O."/>
            <person name="Legault B.-A."/>
            <person name="Ardell D.H."/>
            <person name="Canbaeck B."/>
            <person name="Eriksson A.-S."/>
            <person name="Naeslund A.K."/>
            <person name="Handley S.A."/>
            <person name="Huvet M."/>
            <person name="La Scola B."/>
            <person name="Holmberg M."/>
            <person name="Andersson S.G.E."/>
        </authorList>
    </citation>
    <scope>NUCLEOTIDE SEQUENCE [LARGE SCALE GENOMIC DNA]</scope>
    <source>
        <strain>ATCC 49882 / DSM 28221 / CCUG 30454 / Houston 1</strain>
    </source>
</reference>
<gene>
    <name evidence="1" type="primary">hrcA</name>
    <name type="ordered locus">BH00550</name>
</gene>
<sequence length="356" mass="39440">MKHKLIDDELKYLDERSRDIFRHIVEAYLNDGGPVGSRNLSRLLRQTLSPATIRNVMSDLEHLGLIYAPHVSAGRMPTQSGLRFFVDAFMEAGDLPNEERENIEAQVKEAGHAQSVEHFLVQASQVLSDLSRGAGLVLATKHEGTLKHIEFVRLDGEHALAVLVTQQGGVENRIVHLPEGVTHAQLTEATNFLNAHIQGLTLSEAKEEIARLCSETRAALDHLSHHLVETGLALWGGEGADHKIRLIVRGRSNLLEDVKAEEDLKRLRHLFDDLETRESMAQLLDLTDEGSGVRIFIGSENKLFSLSGSSLVVAPYRDSQQKVIGALGVIGPTRLNYARIVPMVDYTAQLVSQLLR</sequence>
<name>HRCA_BARHE</name>
<organism>
    <name type="scientific">Bartonella henselae (strain ATCC 49882 / DSM 28221 / CCUG 30454 / Houston 1)</name>
    <name type="common">Rochalimaea henselae</name>
    <dbReference type="NCBI Taxonomy" id="283166"/>
    <lineage>
        <taxon>Bacteria</taxon>
        <taxon>Pseudomonadati</taxon>
        <taxon>Pseudomonadota</taxon>
        <taxon>Alphaproteobacteria</taxon>
        <taxon>Hyphomicrobiales</taxon>
        <taxon>Bartonellaceae</taxon>
        <taxon>Bartonella</taxon>
    </lineage>
</organism>
<evidence type="ECO:0000255" key="1">
    <source>
        <dbReference type="HAMAP-Rule" id="MF_00081"/>
    </source>
</evidence>
<keyword id="KW-0678">Repressor</keyword>
<keyword id="KW-0346">Stress response</keyword>
<keyword id="KW-0804">Transcription</keyword>
<keyword id="KW-0805">Transcription regulation</keyword>
<proteinExistence type="inferred from homology"/>
<comment type="function">
    <text evidence="1">Negative regulator of class I heat shock genes (grpE-dnaK-dnaJ and groELS operons). Prevents heat-shock induction of these operons.</text>
</comment>
<comment type="similarity">
    <text evidence="1">Belongs to the HrcA family.</text>
</comment>
<feature type="chain" id="PRO_0000182451" description="Heat-inducible transcription repressor HrcA">
    <location>
        <begin position="1"/>
        <end position="356"/>
    </location>
</feature>
<accession>Q6G564</accession>
<dbReference type="EMBL" id="BX897699">
    <property type="protein sequence ID" value="CAF26871.1"/>
    <property type="molecule type" value="Genomic_DNA"/>
</dbReference>
<dbReference type="RefSeq" id="WP_011180018.1">
    <property type="nucleotide sequence ID" value="NZ_LRIJ02000001.1"/>
</dbReference>
<dbReference type="SMR" id="Q6G564"/>
<dbReference type="PaxDb" id="283166-BH00550"/>
<dbReference type="DNASU" id="2865129"/>
<dbReference type="EnsemblBacteria" id="CAF26871">
    <property type="protein sequence ID" value="CAF26871"/>
    <property type="gene ID" value="BH00550"/>
</dbReference>
<dbReference type="GeneID" id="92986342"/>
<dbReference type="KEGG" id="bhe:BH00550"/>
<dbReference type="eggNOG" id="COG1420">
    <property type="taxonomic scope" value="Bacteria"/>
</dbReference>
<dbReference type="OrthoDB" id="9783139at2"/>
<dbReference type="Proteomes" id="UP000000421">
    <property type="component" value="Chromosome"/>
</dbReference>
<dbReference type="GO" id="GO:0003677">
    <property type="term" value="F:DNA binding"/>
    <property type="evidence" value="ECO:0007669"/>
    <property type="project" value="InterPro"/>
</dbReference>
<dbReference type="GO" id="GO:0045892">
    <property type="term" value="P:negative regulation of DNA-templated transcription"/>
    <property type="evidence" value="ECO:0007669"/>
    <property type="project" value="UniProtKB-UniRule"/>
</dbReference>
<dbReference type="Gene3D" id="3.30.450.40">
    <property type="match status" value="1"/>
</dbReference>
<dbReference type="Gene3D" id="3.30.390.60">
    <property type="entry name" value="Heat-inducible transcription repressor hrca homolog, domain 3"/>
    <property type="match status" value="1"/>
</dbReference>
<dbReference type="Gene3D" id="1.10.10.10">
    <property type="entry name" value="Winged helix-like DNA-binding domain superfamily/Winged helix DNA-binding domain"/>
    <property type="match status" value="1"/>
</dbReference>
<dbReference type="HAMAP" id="MF_00081">
    <property type="entry name" value="HrcA"/>
    <property type="match status" value="1"/>
</dbReference>
<dbReference type="InterPro" id="IPR029016">
    <property type="entry name" value="GAF-like_dom_sf"/>
</dbReference>
<dbReference type="InterPro" id="IPR002571">
    <property type="entry name" value="HrcA"/>
</dbReference>
<dbReference type="InterPro" id="IPR021153">
    <property type="entry name" value="HrcA_C"/>
</dbReference>
<dbReference type="InterPro" id="IPR036388">
    <property type="entry name" value="WH-like_DNA-bd_sf"/>
</dbReference>
<dbReference type="InterPro" id="IPR036390">
    <property type="entry name" value="WH_DNA-bd_sf"/>
</dbReference>
<dbReference type="InterPro" id="IPR023120">
    <property type="entry name" value="WHTH_transcript_rep_HrcA_IDD"/>
</dbReference>
<dbReference type="NCBIfam" id="TIGR00331">
    <property type="entry name" value="hrcA"/>
    <property type="match status" value="1"/>
</dbReference>
<dbReference type="PANTHER" id="PTHR34824">
    <property type="entry name" value="HEAT-INDUCIBLE TRANSCRIPTION REPRESSOR HRCA"/>
    <property type="match status" value="1"/>
</dbReference>
<dbReference type="PANTHER" id="PTHR34824:SF1">
    <property type="entry name" value="HEAT-INDUCIBLE TRANSCRIPTION REPRESSOR HRCA"/>
    <property type="match status" value="1"/>
</dbReference>
<dbReference type="Pfam" id="PF01628">
    <property type="entry name" value="HrcA"/>
    <property type="match status" value="1"/>
</dbReference>
<dbReference type="PIRSF" id="PIRSF005485">
    <property type="entry name" value="HrcA"/>
    <property type="match status" value="1"/>
</dbReference>
<dbReference type="SUPFAM" id="SSF55781">
    <property type="entry name" value="GAF domain-like"/>
    <property type="match status" value="1"/>
</dbReference>
<dbReference type="SUPFAM" id="SSF46785">
    <property type="entry name" value="Winged helix' DNA-binding domain"/>
    <property type="match status" value="1"/>
</dbReference>